<keyword id="KW-0167">Capsid protein</keyword>
<keyword id="KW-1139">Helical capsid protein</keyword>
<keyword id="KW-1048">Host nucleus</keyword>
<keyword id="KW-0945">Host-virus interaction</keyword>
<keyword id="KW-0687">Ribonucleoprotein</keyword>
<keyword id="KW-0694">RNA-binding</keyword>
<keyword id="KW-0543">Viral nucleoprotein</keyword>
<keyword id="KW-1163">Viral penetration into host nucleus</keyword>
<keyword id="KW-0946">Virion</keyword>
<keyword id="KW-1160">Virus entry into host cell</keyword>
<dbReference type="EMBL" id="CY020456">
    <property type="protein sequence ID" value="ABO38366.1"/>
    <property type="molecule type" value="Viral_cRNA"/>
</dbReference>
<dbReference type="SMR" id="A4GCK1"/>
<dbReference type="PRO" id="PR:A4GCK1"/>
<dbReference type="Proteomes" id="UP000008580">
    <property type="component" value="Genome"/>
</dbReference>
<dbReference type="GO" id="GO:0019029">
    <property type="term" value="C:helical viral capsid"/>
    <property type="evidence" value="ECO:0007669"/>
    <property type="project" value="UniProtKB-UniRule"/>
</dbReference>
<dbReference type="GO" id="GO:0043657">
    <property type="term" value="C:host cell"/>
    <property type="evidence" value="ECO:0007669"/>
    <property type="project" value="GOC"/>
</dbReference>
<dbReference type="GO" id="GO:0042025">
    <property type="term" value="C:host cell nucleus"/>
    <property type="evidence" value="ECO:0007669"/>
    <property type="project" value="UniProtKB-SubCell"/>
</dbReference>
<dbReference type="GO" id="GO:1990904">
    <property type="term" value="C:ribonucleoprotein complex"/>
    <property type="evidence" value="ECO:0007669"/>
    <property type="project" value="UniProtKB-KW"/>
</dbReference>
<dbReference type="GO" id="GO:0019013">
    <property type="term" value="C:viral nucleocapsid"/>
    <property type="evidence" value="ECO:0007669"/>
    <property type="project" value="UniProtKB-UniRule"/>
</dbReference>
<dbReference type="GO" id="GO:0003723">
    <property type="term" value="F:RNA binding"/>
    <property type="evidence" value="ECO:0007669"/>
    <property type="project" value="UniProtKB-UniRule"/>
</dbReference>
<dbReference type="GO" id="GO:0005198">
    <property type="term" value="F:structural molecule activity"/>
    <property type="evidence" value="ECO:0007669"/>
    <property type="project" value="UniProtKB-UniRule"/>
</dbReference>
<dbReference type="GO" id="GO:0046718">
    <property type="term" value="P:symbiont entry into host cell"/>
    <property type="evidence" value="ECO:0007669"/>
    <property type="project" value="UniProtKB-KW"/>
</dbReference>
<dbReference type="GO" id="GO:0075732">
    <property type="term" value="P:viral penetration into host nucleus"/>
    <property type="evidence" value="ECO:0007669"/>
    <property type="project" value="UniProtKB-UniRule"/>
</dbReference>
<dbReference type="HAMAP" id="MF_04070">
    <property type="entry name" value="INFV_NCAP"/>
    <property type="match status" value="1"/>
</dbReference>
<dbReference type="InterPro" id="IPR002141">
    <property type="entry name" value="Flu_NP"/>
</dbReference>
<dbReference type="Pfam" id="PF00506">
    <property type="entry name" value="Flu_NP"/>
    <property type="match status" value="1"/>
</dbReference>
<dbReference type="SUPFAM" id="SSF161003">
    <property type="entry name" value="flu NP-like"/>
    <property type="match status" value="1"/>
</dbReference>
<accession>A4GCK1</accession>
<protein>
    <recommendedName>
        <fullName evidence="1">Nucleoprotein</fullName>
    </recommendedName>
    <alternativeName>
        <fullName evidence="1">Nucleocapsid protein</fullName>
        <shortName evidence="1">Protein N</shortName>
    </alternativeName>
</protein>
<feature type="chain" id="PRO_0000372941" description="Nucleoprotein">
    <location>
        <begin position="1"/>
        <end position="498"/>
    </location>
</feature>
<feature type="region of interest" description="Disordered" evidence="2">
    <location>
        <begin position="1"/>
        <end position="21"/>
    </location>
</feature>
<feature type="short sequence motif" description="Unconventional nuclear localization signal" evidence="1">
    <location>
        <begin position="1"/>
        <end position="18"/>
    </location>
</feature>
<feature type="short sequence motif" description="Bipartite nuclear localization signal" evidence="1">
    <location>
        <begin position="198"/>
        <end position="216"/>
    </location>
</feature>
<feature type="compositionally biased region" description="Basic and acidic residues" evidence="2">
    <location>
        <begin position="8"/>
        <end position="21"/>
    </location>
</feature>
<evidence type="ECO:0000255" key="1">
    <source>
        <dbReference type="HAMAP-Rule" id="MF_04070"/>
    </source>
</evidence>
<evidence type="ECO:0000256" key="2">
    <source>
        <dbReference type="SAM" id="MobiDB-lite"/>
    </source>
</evidence>
<sequence>MASQGTKRSYEQMETDGERQNATEIRASVGKMIGGIGRFYIQMCTELKLNDYEGRLIQNSLTIERMVLSAFDERRNKYLEEHPSAGKDPKKTGGPIYKRVDGKWMRKLVLYDKEEIRRIWRQANNGDDATAGLTHMMIWHSNLNDTTYQRTRALVRTGMDPRMCSLMQGSTLPRRSGAAGAAVKGVGTMVLELIRMIKRGINDRNFWRGENGRKTRIAYERMCNILKGKFQTAAQRAMMDQVRESRNPGNAEIEDLTFLARSALILRGSVAHKSCLPACVYGPAVASGYDFEKEGYSLVGIDPFKLLQTSQVYSLIRSNENPAHKSQLVWMACNSAAFEDLRVSSFIRGTKVIPRGKLSTRGVQIASNENMDTMVSSTLELRSRYWAIRTRSGGNTNQQRASAGQISIQPTFSVQRNLPFDKTTIMAAFTGNAEGRTSDMRAEIIKMMESARPEEVSFQGRGVFELSDERAANPIVPSFDMSNEGSYFFGDNAEEYDN</sequence>
<proteinExistence type="inferred from homology"/>
<organismHost>
    <name type="scientific">Aves</name>
    <dbReference type="NCBI Taxonomy" id="8782"/>
</organismHost>
<organismHost>
    <name type="scientific">Homo sapiens</name>
    <name type="common">Human</name>
    <dbReference type="NCBI Taxonomy" id="9606"/>
</organismHost>
<organismHost>
    <name type="scientific">Sus scrofa</name>
    <name type="common">Pig</name>
    <dbReference type="NCBI Taxonomy" id="9823"/>
</organismHost>
<organism>
    <name type="scientific">Influenza A virus (strain A/India/6263/1980 H1N1)</name>
    <dbReference type="NCBI Taxonomy" id="393562"/>
    <lineage>
        <taxon>Viruses</taxon>
        <taxon>Riboviria</taxon>
        <taxon>Orthornavirae</taxon>
        <taxon>Negarnaviricota</taxon>
        <taxon>Polyploviricotina</taxon>
        <taxon>Insthoviricetes</taxon>
        <taxon>Articulavirales</taxon>
        <taxon>Orthomyxoviridae</taxon>
        <taxon>Alphainfluenzavirus</taxon>
        <taxon>Alphainfluenzavirus influenzae</taxon>
        <taxon>Influenza A virus</taxon>
    </lineage>
</organism>
<comment type="function">
    <text evidence="1">Encapsidates the negative strand viral RNA, protecting it from nucleases. The encapsidated genomic RNA is termed the ribonucleoprotein (RNP) and serves as template for transcription and replication. The RNP needs to be localized in the host nucleus to start an infectious cycle, but is too large to diffuse through the nuclear pore complex. NP comprises at least 2 nuclear localization signals that are responsible for the active RNP import into the nucleus through cellular importin alpha/beta pathway. Later in the infection, nclear export of RNPs are mediated through viral proteins NEP interacting with M1 which binds nucleoproteins. It is possible that nucleoprotein binds directly host exportin-1/XPO1 and plays an active role in RNPs nuclear export. M1 interaction with RNP seems to hide nucleoprotein's nuclear localization signals. Soon after a virion infects a new cell, M1 dissociates from the RNP under acidification of the virion driven by M2 protein. Dissociation of M1 from RNP unmasks nucleoprotein's nuclear localization signals, targeting the RNP to the nucleus.</text>
</comment>
<comment type="subunit">
    <text evidence="1">Homomultimerizes to form the nucleocapsid. May bind host exportin-1/XPO1. Binds to viral genomic RNA. Protein-RNA contacts are mediated by a combination of electrostatic interactions between positively charged residues and the phosphate backbone and planar interactions between aromatic side chains and bases.</text>
</comment>
<comment type="subcellular location">
    <subcellularLocation>
        <location evidence="1">Virion</location>
    </subcellularLocation>
    <subcellularLocation>
        <location evidence="1">Host nucleus</location>
    </subcellularLocation>
</comment>
<comment type="PTM">
    <text evidence="1">Late in virus-infected cells, may be cleaved from a 56-kDa protein to a 53-kDa protein by a cellular caspase. This cleavage might be a marker for the onset of apoptosis in infected cells or have a specific function in virus host interaction.</text>
</comment>
<comment type="similarity">
    <text evidence="1">Belongs to the influenza viruses nucleoprotein family.</text>
</comment>
<reference key="1">
    <citation type="submission" date="2007-03" db="EMBL/GenBank/DDBJ databases">
        <title>The NIAID influenza genome sequencing project.</title>
        <authorList>
            <person name="Ghedin E."/>
            <person name="Spiro D."/>
            <person name="Miller N."/>
            <person name="Zaborsky J."/>
            <person name="Feldblyum T."/>
            <person name="Subbu V."/>
            <person name="Shumway M."/>
            <person name="Sparenborg J."/>
            <person name="Groveman L."/>
            <person name="Halpin R."/>
            <person name="Sitz J."/>
            <person name="Koo H."/>
            <person name="Salzberg S.L."/>
            <person name="Webster R.G."/>
            <person name="Hoffmann E."/>
            <person name="Krauss S."/>
            <person name="Naeve C."/>
            <person name="Bao Y."/>
            <person name="Bolotov P."/>
            <person name="Dernovoy D."/>
            <person name="Kiryutin B."/>
            <person name="Lipman D.J."/>
            <person name="Tatusova T."/>
        </authorList>
    </citation>
    <scope>NUCLEOTIDE SEQUENCE [GENOMIC RNA]</scope>
</reference>
<reference key="2">
    <citation type="submission" date="2007-03" db="EMBL/GenBank/DDBJ databases">
        <authorList>
            <consortium name="The NIAID Influenza Genome Sequencing Consortium"/>
        </authorList>
    </citation>
    <scope>NUCLEOTIDE SEQUENCE [GENOMIC RNA]</scope>
</reference>
<name>NCAP_I80AA</name>
<gene>
    <name evidence="1" type="primary">NP</name>
</gene>